<comment type="function">
    <text evidence="2">Transcriptional repressor; binds to the DNA sequence 5'-CCGGAAGT-3'. Plays a role in hematopoiesis and malignant transformation.</text>
</comment>
<comment type="subunit">
    <text evidence="1">Can form homodimers or heterodimers with TEL2 or FLI1. Interacts with L3MBTL1 and HDAC9 (By similarity).</text>
</comment>
<comment type="subcellular location">
    <subcellularLocation>
        <location evidence="4">Nucleus</location>
    </subcellularLocation>
</comment>
<comment type="similarity">
    <text evidence="7">Belongs to the ETS family.</text>
</comment>
<keyword id="KW-0007">Acetylation</keyword>
<keyword id="KW-0238">DNA-binding</keyword>
<keyword id="KW-1017">Isopeptide bond</keyword>
<keyword id="KW-0539">Nucleus</keyword>
<keyword id="KW-0597">Phosphoprotein</keyword>
<keyword id="KW-1185">Reference proteome</keyword>
<keyword id="KW-0678">Repressor</keyword>
<keyword id="KW-0804">Transcription</keyword>
<keyword id="KW-0805">Transcription regulation</keyword>
<keyword id="KW-0832">Ubl conjugation</keyword>
<protein>
    <recommendedName>
        <fullName>Transcription factor ETV6</fullName>
    </recommendedName>
</protein>
<evidence type="ECO:0000250" key="1"/>
<evidence type="ECO:0000250" key="2">
    <source>
        <dbReference type="UniProtKB" id="P41212"/>
    </source>
</evidence>
<evidence type="ECO:0000250" key="3">
    <source>
        <dbReference type="UniProtKB" id="P97360"/>
    </source>
</evidence>
<evidence type="ECO:0000255" key="4">
    <source>
        <dbReference type="PROSITE-ProRule" id="PRU00237"/>
    </source>
</evidence>
<evidence type="ECO:0000255" key="5">
    <source>
        <dbReference type="PROSITE-ProRule" id="PRU00762"/>
    </source>
</evidence>
<evidence type="ECO:0000256" key="6">
    <source>
        <dbReference type="SAM" id="MobiDB-lite"/>
    </source>
</evidence>
<evidence type="ECO:0000305" key="7"/>
<organism>
    <name type="scientific">Bos taurus</name>
    <name type="common">Bovine</name>
    <dbReference type="NCBI Taxonomy" id="9913"/>
    <lineage>
        <taxon>Eukaryota</taxon>
        <taxon>Metazoa</taxon>
        <taxon>Chordata</taxon>
        <taxon>Craniata</taxon>
        <taxon>Vertebrata</taxon>
        <taxon>Euteleostomi</taxon>
        <taxon>Mammalia</taxon>
        <taxon>Eutheria</taxon>
        <taxon>Laurasiatheria</taxon>
        <taxon>Artiodactyla</taxon>
        <taxon>Ruminantia</taxon>
        <taxon>Pecora</taxon>
        <taxon>Bovidae</taxon>
        <taxon>Bovinae</taxon>
        <taxon>Bos</taxon>
    </lineage>
</organism>
<proteinExistence type="evidence at transcript level"/>
<feature type="chain" id="PRO_0000287134" description="Transcription factor ETV6">
    <location>
        <begin position="1"/>
        <end position="452"/>
    </location>
</feature>
<feature type="domain" description="PNT" evidence="5">
    <location>
        <begin position="40"/>
        <end position="124"/>
    </location>
</feature>
<feature type="DNA-binding region" description="ETS" evidence="4">
    <location>
        <begin position="339"/>
        <end position="420"/>
    </location>
</feature>
<feature type="region of interest" description="Disordered" evidence="6">
    <location>
        <begin position="154"/>
        <end position="262"/>
    </location>
</feature>
<feature type="compositionally biased region" description="Polar residues" evidence="6">
    <location>
        <begin position="158"/>
        <end position="174"/>
    </location>
</feature>
<feature type="modified residue" description="N6-acetyllysine; alternate" evidence="2">
    <location>
        <position position="11"/>
    </location>
</feature>
<feature type="modified residue" description="Phosphothreonine" evidence="2">
    <location>
        <position position="18"/>
    </location>
</feature>
<feature type="modified residue" description="Phosphoserine" evidence="2">
    <location>
        <position position="22"/>
    </location>
</feature>
<feature type="modified residue" description="Phosphoserine" evidence="2">
    <location>
        <position position="213"/>
    </location>
</feature>
<feature type="modified residue" description="Phosphoserine" evidence="3">
    <location>
        <position position="238"/>
    </location>
</feature>
<feature type="modified residue" description="Phosphoserine" evidence="2">
    <location>
        <position position="257"/>
    </location>
</feature>
<feature type="modified residue" description="N6-acetyllysine; alternate" evidence="2">
    <location>
        <position position="302"/>
    </location>
</feature>
<feature type="modified residue" description="Phosphoserine" evidence="3">
    <location>
        <position position="323"/>
    </location>
</feature>
<feature type="cross-link" description="Glycyl lysine isopeptide (Lys-Gly) (interchain with G-Cter in SUMO2); alternate" evidence="2">
    <location>
        <position position="11"/>
    </location>
</feature>
<feature type="cross-link" description="Glycyl lysine isopeptide (Lys-Gly) (interchain with G-Cter in SUMO2)" evidence="2">
    <location>
        <position position="288"/>
    </location>
</feature>
<feature type="cross-link" description="Glycyl lysine isopeptide (Lys-Gly) (interchain with G-Cter in SUMO2); alternate" evidence="2">
    <location>
        <position position="302"/>
    </location>
</feature>
<feature type="cross-link" description="Glycyl lysine isopeptide (Lys-Gly) (interchain with G-Cter in SUMO2)" evidence="2">
    <location>
        <position position="403"/>
    </location>
</feature>
<feature type="cross-link" description="Glycyl lysine isopeptide (Lys-Gly) (interchain with G-Cter in SUMO2)" evidence="2">
    <location>
        <position position="421"/>
    </location>
</feature>
<sequence length="452" mass="52992">MSETPAQCSIKQERISYTPPESPVPSYASSTPLHVPVPRALRMEEDSIRLPAHLRLQPMFWSRDDVAQWLKWAENEFSLRPIDSNTFEMNGKALLLLTKEDFRYRSPHSGDVLYELLQHILKQRKPRILFSPFFHPGNSIHTQQEVILHQNHEEDNGVQRTSRPSAENVHQNPPTIELLHRSRSPITTNHRPSPDPEQRPLRSPLDNMIRRLSPAERAQGPRLHQENNHQEPYPLSVSPMENNHCPPSSEPHPRPSSPRQEGTRVIQLMPSPIMHPLILNPRHSVDFKQPRLSEDGLHREGKPINLSHREDLAYMNHIMVSVSPPEEHAVPIGRIADCRLLWDYVYQLLSDSRYENFIRWEDKESKIFRIVDPNGLARLWGNHKNRTNMTYEKMSRALRHYYKLNIIRKEPGQRLLFRFMKTPDEIMSGRTDRLEHLESQELDEQIYQEDEC</sequence>
<dbReference type="EMBL" id="BC120331">
    <property type="protein sequence ID" value="AAI20332.1"/>
    <property type="molecule type" value="mRNA"/>
</dbReference>
<dbReference type="RefSeq" id="NP_001015514.2">
    <property type="nucleotide sequence ID" value="NM_001015514.2"/>
</dbReference>
<dbReference type="BMRB" id="Q0VC65"/>
<dbReference type="SMR" id="Q0VC65"/>
<dbReference type="FunCoup" id="Q0VC65">
    <property type="interactions" value="1590"/>
</dbReference>
<dbReference type="STRING" id="9913.ENSBTAP00000071376"/>
<dbReference type="PaxDb" id="9913-ENSBTAP00000052186"/>
<dbReference type="GeneID" id="504512"/>
<dbReference type="KEGG" id="bta:504512"/>
<dbReference type="CTD" id="2120"/>
<dbReference type="VEuPathDB" id="HostDB:ENSBTAG00000014605"/>
<dbReference type="eggNOG" id="KOG3804">
    <property type="taxonomic scope" value="Eukaryota"/>
</dbReference>
<dbReference type="HOGENOM" id="CLU_037998_1_0_1"/>
<dbReference type="InParanoid" id="Q0VC65"/>
<dbReference type="OMA" id="AFMNHIM"/>
<dbReference type="OrthoDB" id="6408625at2759"/>
<dbReference type="Proteomes" id="UP000009136">
    <property type="component" value="Chromosome 5"/>
</dbReference>
<dbReference type="Bgee" id="ENSBTAG00000014605">
    <property type="expression patterns" value="Expressed in parenchyma of mammary gland and 104 other cell types or tissues"/>
</dbReference>
<dbReference type="GO" id="GO:0005634">
    <property type="term" value="C:nucleus"/>
    <property type="evidence" value="ECO:0000318"/>
    <property type="project" value="GO_Central"/>
</dbReference>
<dbReference type="GO" id="GO:0000981">
    <property type="term" value="F:DNA-binding transcription factor activity, RNA polymerase II-specific"/>
    <property type="evidence" value="ECO:0000318"/>
    <property type="project" value="GO_Central"/>
</dbReference>
<dbReference type="GO" id="GO:0043565">
    <property type="term" value="F:sequence-specific DNA binding"/>
    <property type="evidence" value="ECO:0007669"/>
    <property type="project" value="InterPro"/>
</dbReference>
<dbReference type="GO" id="GO:0030154">
    <property type="term" value="P:cell differentiation"/>
    <property type="evidence" value="ECO:0000318"/>
    <property type="project" value="GO_Central"/>
</dbReference>
<dbReference type="GO" id="GO:0071425">
    <property type="term" value="P:hematopoietic stem cell proliferation"/>
    <property type="evidence" value="ECO:0000250"/>
    <property type="project" value="UniProtKB"/>
</dbReference>
<dbReference type="GO" id="GO:0006357">
    <property type="term" value="P:regulation of transcription by RNA polymerase II"/>
    <property type="evidence" value="ECO:0000318"/>
    <property type="project" value="GO_Central"/>
</dbReference>
<dbReference type="CDD" id="cd08535">
    <property type="entry name" value="SAM_PNT-Tel_Yan"/>
    <property type="match status" value="1"/>
</dbReference>
<dbReference type="FunFam" id="1.10.150.50:FF:000030">
    <property type="entry name" value="transcription factor ETV6"/>
    <property type="match status" value="1"/>
</dbReference>
<dbReference type="FunFam" id="1.10.10.10:FF:000176">
    <property type="entry name" value="transcription factor ETV6 isoform X2"/>
    <property type="match status" value="1"/>
</dbReference>
<dbReference type="Gene3D" id="1.10.150.50">
    <property type="entry name" value="Transcription Factor, Ets-1"/>
    <property type="match status" value="1"/>
</dbReference>
<dbReference type="Gene3D" id="1.10.10.10">
    <property type="entry name" value="Winged helix-like DNA-binding domain superfamily/Winged helix DNA-binding domain"/>
    <property type="match status" value="1"/>
</dbReference>
<dbReference type="InterPro" id="IPR000418">
    <property type="entry name" value="Ets_dom"/>
</dbReference>
<dbReference type="InterPro" id="IPR046328">
    <property type="entry name" value="ETS_fam"/>
</dbReference>
<dbReference type="InterPro" id="IPR003118">
    <property type="entry name" value="Pointed_dom"/>
</dbReference>
<dbReference type="InterPro" id="IPR013761">
    <property type="entry name" value="SAM/pointed_sf"/>
</dbReference>
<dbReference type="InterPro" id="IPR036388">
    <property type="entry name" value="WH-like_DNA-bd_sf"/>
</dbReference>
<dbReference type="InterPro" id="IPR036390">
    <property type="entry name" value="WH_DNA-bd_sf"/>
</dbReference>
<dbReference type="PANTHER" id="PTHR11849">
    <property type="entry name" value="ETS"/>
    <property type="match status" value="1"/>
</dbReference>
<dbReference type="PANTHER" id="PTHR11849:SF19">
    <property type="entry name" value="TRANSCRIPTION FACTOR ETV6"/>
    <property type="match status" value="1"/>
</dbReference>
<dbReference type="Pfam" id="PF00178">
    <property type="entry name" value="Ets"/>
    <property type="match status" value="1"/>
</dbReference>
<dbReference type="Pfam" id="PF02198">
    <property type="entry name" value="SAM_PNT"/>
    <property type="match status" value="1"/>
</dbReference>
<dbReference type="PRINTS" id="PR00454">
    <property type="entry name" value="ETSDOMAIN"/>
</dbReference>
<dbReference type="SMART" id="SM00413">
    <property type="entry name" value="ETS"/>
    <property type="match status" value="1"/>
</dbReference>
<dbReference type="SMART" id="SM00251">
    <property type="entry name" value="SAM_PNT"/>
    <property type="match status" value="1"/>
</dbReference>
<dbReference type="SUPFAM" id="SSF47769">
    <property type="entry name" value="SAM/Pointed domain"/>
    <property type="match status" value="1"/>
</dbReference>
<dbReference type="SUPFAM" id="SSF46785">
    <property type="entry name" value="Winged helix' DNA-binding domain"/>
    <property type="match status" value="1"/>
</dbReference>
<dbReference type="PROSITE" id="PS00346">
    <property type="entry name" value="ETS_DOMAIN_2"/>
    <property type="match status" value="1"/>
</dbReference>
<dbReference type="PROSITE" id="PS50061">
    <property type="entry name" value="ETS_DOMAIN_3"/>
    <property type="match status" value="1"/>
</dbReference>
<dbReference type="PROSITE" id="PS51433">
    <property type="entry name" value="PNT"/>
    <property type="match status" value="1"/>
</dbReference>
<name>ETV6_BOVIN</name>
<accession>Q0VC65</accession>
<gene>
    <name type="primary">ETV6</name>
</gene>
<reference key="1">
    <citation type="submission" date="2006-08" db="EMBL/GenBank/DDBJ databases">
        <authorList>
            <consortium name="NIH - Mammalian Gene Collection (MGC) project"/>
        </authorList>
    </citation>
    <scope>NUCLEOTIDE SEQUENCE [LARGE SCALE MRNA]</scope>
    <source>
        <strain>Hereford</strain>
        <tissue>Fetal muscle</tissue>
    </source>
</reference>